<proteinExistence type="inferred from homology"/>
<evidence type="ECO:0000255" key="1">
    <source>
        <dbReference type="HAMAP-Rule" id="MF_01347"/>
    </source>
</evidence>
<evidence type="ECO:0000256" key="2">
    <source>
        <dbReference type="SAM" id="MobiDB-lite"/>
    </source>
</evidence>
<protein>
    <recommendedName>
        <fullName evidence="1">ATP synthase subunit beta</fullName>
        <ecNumber evidence="1">7.1.2.2</ecNumber>
    </recommendedName>
    <alternativeName>
        <fullName evidence="1">ATP synthase F1 sector subunit beta</fullName>
    </alternativeName>
    <alternativeName>
        <fullName evidence="1">F-ATPase subunit beta</fullName>
    </alternativeName>
</protein>
<reference key="1">
    <citation type="journal article" date="2002" name="Proc. Natl. Acad. Sci. U.S.A.">
        <title>The genome sequence of the facultative intracellular pathogen Brucella melitensis.</title>
        <authorList>
            <person name="DelVecchio V.G."/>
            <person name="Kapatral V."/>
            <person name="Redkar R.J."/>
            <person name="Patra G."/>
            <person name="Mujer C."/>
            <person name="Los T."/>
            <person name="Ivanova N."/>
            <person name="Anderson I."/>
            <person name="Bhattacharyya A."/>
            <person name="Lykidis A."/>
            <person name="Reznik G."/>
            <person name="Jablonski L."/>
            <person name="Larsen N."/>
            <person name="D'Souza M."/>
            <person name="Bernal A."/>
            <person name="Mazur M."/>
            <person name="Goltsman E."/>
            <person name="Selkov E."/>
            <person name="Elzer P.H."/>
            <person name="Hagius S."/>
            <person name="O'Callaghan D."/>
            <person name="Letesson J.-J."/>
            <person name="Haselkorn R."/>
            <person name="Kyrpides N.C."/>
            <person name="Overbeek R."/>
        </authorList>
    </citation>
    <scope>NUCLEOTIDE SEQUENCE [LARGE SCALE GENOMIC DNA]</scope>
    <source>
        <strain>ATCC 23456 / CCUG 17765 / NCTC 10094 / 16M</strain>
    </source>
</reference>
<gene>
    <name evidence="1" type="primary">atpD</name>
    <name type="ordered locus">BMEI0251</name>
</gene>
<organism>
    <name type="scientific">Brucella melitensis biotype 1 (strain ATCC 23456 / CCUG 17765 / NCTC 10094 / 16M)</name>
    <dbReference type="NCBI Taxonomy" id="224914"/>
    <lineage>
        <taxon>Bacteria</taxon>
        <taxon>Pseudomonadati</taxon>
        <taxon>Pseudomonadota</taxon>
        <taxon>Alphaproteobacteria</taxon>
        <taxon>Hyphomicrobiales</taxon>
        <taxon>Brucellaceae</taxon>
        <taxon>Brucella/Ochrobactrum group</taxon>
        <taxon>Brucella</taxon>
    </lineage>
</organism>
<feature type="chain" id="PRO_0000254228" description="ATP synthase subunit beta">
    <location>
        <begin position="1"/>
        <end position="521"/>
    </location>
</feature>
<feature type="region of interest" description="Disordered" evidence="2">
    <location>
        <begin position="1"/>
        <end position="42"/>
    </location>
</feature>
<feature type="compositionally biased region" description="Low complexity" evidence="2">
    <location>
        <begin position="1"/>
        <end position="21"/>
    </location>
</feature>
<feature type="compositionally biased region" description="Low complexity" evidence="2">
    <location>
        <begin position="28"/>
        <end position="42"/>
    </location>
</feature>
<feature type="binding site" evidence="1">
    <location>
        <begin position="199"/>
        <end position="206"/>
    </location>
    <ligand>
        <name>ATP</name>
        <dbReference type="ChEBI" id="CHEBI:30616"/>
    </ligand>
</feature>
<name>ATPB_BRUME</name>
<comment type="function">
    <text evidence="1">Produces ATP from ADP in the presence of a proton gradient across the membrane. The catalytic sites are hosted primarily by the beta subunits.</text>
</comment>
<comment type="catalytic activity">
    <reaction evidence="1">
        <text>ATP + H2O + 4 H(+)(in) = ADP + phosphate + 5 H(+)(out)</text>
        <dbReference type="Rhea" id="RHEA:57720"/>
        <dbReference type="ChEBI" id="CHEBI:15377"/>
        <dbReference type="ChEBI" id="CHEBI:15378"/>
        <dbReference type="ChEBI" id="CHEBI:30616"/>
        <dbReference type="ChEBI" id="CHEBI:43474"/>
        <dbReference type="ChEBI" id="CHEBI:456216"/>
        <dbReference type="EC" id="7.1.2.2"/>
    </reaction>
</comment>
<comment type="subunit">
    <text evidence="1">F-type ATPases have 2 components, CF(1) - the catalytic core - and CF(0) - the membrane proton channel. CF(1) has five subunits: alpha(3), beta(3), gamma(1), delta(1), epsilon(1). CF(0) has three main subunits: a(1), b(2) and c(9-12). The alpha and beta chains form an alternating ring which encloses part of the gamma chain. CF(1) is attached to CF(0) by a central stalk formed by the gamma and epsilon chains, while a peripheral stalk is formed by the delta and b chains.</text>
</comment>
<comment type="subcellular location">
    <subcellularLocation>
        <location evidence="1">Cell inner membrane</location>
        <topology evidence="1">Peripheral membrane protein</topology>
    </subcellularLocation>
</comment>
<comment type="similarity">
    <text evidence="1">Belongs to the ATPase alpha/beta chains family.</text>
</comment>
<dbReference type="EC" id="7.1.2.2" evidence="1"/>
<dbReference type="EMBL" id="AE008917">
    <property type="protein sequence ID" value="AAL51433.1"/>
    <property type="molecule type" value="Genomic_DNA"/>
</dbReference>
<dbReference type="PIR" id="AF3283">
    <property type="entry name" value="AF3283"/>
</dbReference>
<dbReference type="RefSeq" id="WP_004684261.1">
    <property type="nucleotide sequence ID" value="NZ_GG703781.1"/>
</dbReference>
<dbReference type="SMR" id="Q8YJ35"/>
<dbReference type="GeneID" id="97533076"/>
<dbReference type="KEGG" id="bme:BMEI0251"/>
<dbReference type="KEGG" id="bmel:DK63_1181"/>
<dbReference type="PATRIC" id="fig|224914.52.peg.1248"/>
<dbReference type="eggNOG" id="COG0055">
    <property type="taxonomic scope" value="Bacteria"/>
</dbReference>
<dbReference type="PhylomeDB" id="Q8YJ35"/>
<dbReference type="Proteomes" id="UP000000419">
    <property type="component" value="Chromosome I"/>
</dbReference>
<dbReference type="GO" id="GO:0005886">
    <property type="term" value="C:plasma membrane"/>
    <property type="evidence" value="ECO:0007669"/>
    <property type="project" value="UniProtKB-SubCell"/>
</dbReference>
<dbReference type="GO" id="GO:0045259">
    <property type="term" value="C:proton-transporting ATP synthase complex"/>
    <property type="evidence" value="ECO:0007669"/>
    <property type="project" value="UniProtKB-KW"/>
</dbReference>
<dbReference type="GO" id="GO:0005524">
    <property type="term" value="F:ATP binding"/>
    <property type="evidence" value="ECO:0007669"/>
    <property type="project" value="UniProtKB-UniRule"/>
</dbReference>
<dbReference type="GO" id="GO:0016887">
    <property type="term" value="F:ATP hydrolysis activity"/>
    <property type="evidence" value="ECO:0007669"/>
    <property type="project" value="InterPro"/>
</dbReference>
<dbReference type="GO" id="GO:0046933">
    <property type="term" value="F:proton-transporting ATP synthase activity, rotational mechanism"/>
    <property type="evidence" value="ECO:0007669"/>
    <property type="project" value="UniProtKB-UniRule"/>
</dbReference>
<dbReference type="CDD" id="cd18110">
    <property type="entry name" value="ATP-synt_F1_beta_C"/>
    <property type="match status" value="1"/>
</dbReference>
<dbReference type="CDD" id="cd18115">
    <property type="entry name" value="ATP-synt_F1_beta_N"/>
    <property type="match status" value="1"/>
</dbReference>
<dbReference type="CDD" id="cd01133">
    <property type="entry name" value="F1-ATPase_beta_CD"/>
    <property type="match status" value="1"/>
</dbReference>
<dbReference type="FunFam" id="1.10.1140.10:FF:000001">
    <property type="entry name" value="ATP synthase subunit beta"/>
    <property type="match status" value="1"/>
</dbReference>
<dbReference type="FunFam" id="2.40.10.170:FF:000005">
    <property type="entry name" value="ATP synthase subunit beta"/>
    <property type="match status" value="1"/>
</dbReference>
<dbReference type="FunFam" id="3.40.50.300:FF:000026">
    <property type="entry name" value="ATP synthase subunit beta"/>
    <property type="match status" value="1"/>
</dbReference>
<dbReference type="Gene3D" id="2.40.10.170">
    <property type="match status" value="1"/>
</dbReference>
<dbReference type="Gene3D" id="1.10.1140.10">
    <property type="entry name" value="Bovine Mitochondrial F1-atpase, Atp Synthase Beta Chain, Chain D, domain 3"/>
    <property type="match status" value="1"/>
</dbReference>
<dbReference type="Gene3D" id="3.40.50.300">
    <property type="entry name" value="P-loop containing nucleotide triphosphate hydrolases"/>
    <property type="match status" value="1"/>
</dbReference>
<dbReference type="HAMAP" id="MF_01347">
    <property type="entry name" value="ATP_synth_beta_bact"/>
    <property type="match status" value="1"/>
</dbReference>
<dbReference type="InterPro" id="IPR003593">
    <property type="entry name" value="AAA+_ATPase"/>
</dbReference>
<dbReference type="InterPro" id="IPR055190">
    <property type="entry name" value="ATP-synt_VA_C"/>
</dbReference>
<dbReference type="InterPro" id="IPR005722">
    <property type="entry name" value="ATP_synth_F1_bsu"/>
</dbReference>
<dbReference type="InterPro" id="IPR020003">
    <property type="entry name" value="ATPase_a/bsu_AS"/>
</dbReference>
<dbReference type="InterPro" id="IPR050053">
    <property type="entry name" value="ATPase_alpha/beta_chains"/>
</dbReference>
<dbReference type="InterPro" id="IPR004100">
    <property type="entry name" value="ATPase_F1/V1/A1_a/bsu_N"/>
</dbReference>
<dbReference type="InterPro" id="IPR036121">
    <property type="entry name" value="ATPase_F1/V1/A1_a/bsu_N_sf"/>
</dbReference>
<dbReference type="InterPro" id="IPR000194">
    <property type="entry name" value="ATPase_F1/V1/A1_a/bsu_nucl-bd"/>
</dbReference>
<dbReference type="InterPro" id="IPR024034">
    <property type="entry name" value="ATPase_F1/V1_b/a_C"/>
</dbReference>
<dbReference type="InterPro" id="IPR027417">
    <property type="entry name" value="P-loop_NTPase"/>
</dbReference>
<dbReference type="NCBIfam" id="TIGR01039">
    <property type="entry name" value="atpD"/>
    <property type="match status" value="1"/>
</dbReference>
<dbReference type="PANTHER" id="PTHR15184">
    <property type="entry name" value="ATP SYNTHASE"/>
    <property type="match status" value="1"/>
</dbReference>
<dbReference type="PANTHER" id="PTHR15184:SF71">
    <property type="entry name" value="ATP SYNTHASE SUBUNIT BETA, MITOCHONDRIAL"/>
    <property type="match status" value="1"/>
</dbReference>
<dbReference type="Pfam" id="PF00006">
    <property type="entry name" value="ATP-synt_ab"/>
    <property type="match status" value="1"/>
</dbReference>
<dbReference type="Pfam" id="PF02874">
    <property type="entry name" value="ATP-synt_ab_N"/>
    <property type="match status" value="1"/>
</dbReference>
<dbReference type="Pfam" id="PF22919">
    <property type="entry name" value="ATP-synt_VA_C"/>
    <property type="match status" value="1"/>
</dbReference>
<dbReference type="PIRSF" id="PIRSF039072">
    <property type="entry name" value="ATPase_subunit_beta"/>
    <property type="match status" value="1"/>
</dbReference>
<dbReference type="SMART" id="SM00382">
    <property type="entry name" value="AAA"/>
    <property type="match status" value="1"/>
</dbReference>
<dbReference type="SUPFAM" id="SSF47917">
    <property type="entry name" value="C-terminal domain of alpha and beta subunits of F1 ATP synthase"/>
    <property type="match status" value="1"/>
</dbReference>
<dbReference type="SUPFAM" id="SSF50615">
    <property type="entry name" value="N-terminal domain of alpha and beta subunits of F1 ATP synthase"/>
    <property type="match status" value="1"/>
</dbReference>
<dbReference type="SUPFAM" id="SSF52540">
    <property type="entry name" value="P-loop containing nucleoside triphosphate hydrolases"/>
    <property type="match status" value="1"/>
</dbReference>
<dbReference type="PROSITE" id="PS00152">
    <property type="entry name" value="ATPASE_ALPHA_BETA"/>
    <property type="match status" value="1"/>
</dbReference>
<accession>Q8YJ35</accession>
<sequence length="521" mass="54791">MAKAATPKTTAAAEAKPAAKAPAKKAAPKTTAAAKPAATKSGAPKAAAAGAIGHITQVIGAVVDVKFPEGQLPLILNALEVDNQGHRLVLEVAQHLGEDTVRTIAMDATEGLVRGQEARDTGEPIMVPVGVETLGRIMNVIGEPVDEAGPIKTKATRAIHQNAPEYIEQSTEAEILVTGIKVVDLLAPYAKGGKIGLFGGAGVGKTVLIMELINNVAKAHGGYSVFAGVGERTREGNDLYHEMIESGVNKLGGGEGSKAALVYGQMNEPPGARARVALSGLTVAENFRDQGQDVLFFVDNIFRFTQAGSEVSALLGRIPSAVGYQPTLATDMGAMQERITTTTKGSITSVQAIYVPADDLTDPAPATSFAHLDATTVLSRSIAEKGIYPAVDPLDSTSRMLDPKVVGEEHYAVARQVQSILQRYKALQDIIAILGMDELSEEDKLTVARARKIERFLSQPFFVAEVFTGSPGKLVDLADTIKGFKGLCAGDYDHLPEAAFYMVGSIEEALEKAKKLAAEAA</sequence>
<keyword id="KW-0066">ATP synthesis</keyword>
<keyword id="KW-0067">ATP-binding</keyword>
<keyword id="KW-0997">Cell inner membrane</keyword>
<keyword id="KW-1003">Cell membrane</keyword>
<keyword id="KW-0139">CF(1)</keyword>
<keyword id="KW-0375">Hydrogen ion transport</keyword>
<keyword id="KW-0406">Ion transport</keyword>
<keyword id="KW-0472">Membrane</keyword>
<keyword id="KW-0547">Nucleotide-binding</keyword>
<keyword id="KW-1278">Translocase</keyword>
<keyword id="KW-0813">Transport</keyword>